<accession>Q214L4</accession>
<feature type="chain" id="PRO_1000072746" description="5-oxoprolinase subunit A">
    <location>
        <begin position="1"/>
        <end position="255"/>
    </location>
</feature>
<organism>
    <name type="scientific">Rhodopseudomonas palustris (strain BisB18)</name>
    <dbReference type="NCBI Taxonomy" id="316056"/>
    <lineage>
        <taxon>Bacteria</taxon>
        <taxon>Pseudomonadati</taxon>
        <taxon>Pseudomonadota</taxon>
        <taxon>Alphaproteobacteria</taxon>
        <taxon>Hyphomicrobiales</taxon>
        <taxon>Nitrobacteraceae</taxon>
        <taxon>Rhodopseudomonas</taxon>
    </lineage>
</organism>
<keyword id="KW-0067">ATP-binding</keyword>
<keyword id="KW-0378">Hydrolase</keyword>
<keyword id="KW-0547">Nucleotide-binding</keyword>
<dbReference type="EC" id="3.5.2.9" evidence="1"/>
<dbReference type="EMBL" id="CP000301">
    <property type="protein sequence ID" value="ABD88172.1"/>
    <property type="molecule type" value="Genomic_DNA"/>
</dbReference>
<dbReference type="SMR" id="Q214L4"/>
<dbReference type="STRING" id="316056.RPC_2622"/>
<dbReference type="KEGG" id="rpc:RPC_2622"/>
<dbReference type="eggNOG" id="COG1540">
    <property type="taxonomic scope" value="Bacteria"/>
</dbReference>
<dbReference type="HOGENOM" id="CLU_069535_0_0_5"/>
<dbReference type="OrthoDB" id="9773478at2"/>
<dbReference type="GO" id="GO:0017168">
    <property type="term" value="F:5-oxoprolinase (ATP-hydrolyzing) activity"/>
    <property type="evidence" value="ECO:0007669"/>
    <property type="project" value="UniProtKB-UniRule"/>
</dbReference>
<dbReference type="GO" id="GO:0005524">
    <property type="term" value="F:ATP binding"/>
    <property type="evidence" value="ECO:0007669"/>
    <property type="project" value="UniProtKB-UniRule"/>
</dbReference>
<dbReference type="GO" id="GO:0005975">
    <property type="term" value="P:carbohydrate metabolic process"/>
    <property type="evidence" value="ECO:0007669"/>
    <property type="project" value="InterPro"/>
</dbReference>
<dbReference type="CDD" id="cd10787">
    <property type="entry name" value="LamB_YcsF_like"/>
    <property type="match status" value="1"/>
</dbReference>
<dbReference type="Gene3D" id="3.20.20.370">
    <property type="entry name" value="Glycoside hydrolase/deacetylase"/>
    <property type="match status" value="1"/>
</dbReference>
<dbReference type="HAMAP" id="MF_00691">
    <property type="entry name" value="PxpA"/>
    <property type="match status" value="1"/>
</dbReference>
<dbReference type="InterPro" id="IPR011330">
    <property type="entry name" value="Glyco_hydro/deAcase_b/a-brl"/>
</dbReference>
<dbReference type="InterPro" id="IPR005501">
    <property type="entry name" value="LamB/YcsF/PxpA-like"/>
</dbReference>
<dbReference type="NCBIfam" id="NF003814">
    <property type="entry name" value="PRK05406.1-3"/>
    <property type="match status" value="1"/>
</dbReference>
<dbReference type="NCBIfam" id="NF003816">
    <property type="entry name" value="PRK05406.1-5"/>
    <property type="match status" value="1"/>
</dbReference>
<dbReference type="PANTHER" id="PTHR30292:SF0">
    <property type="entry name" value="5-OXOPROLINASE SUBUNIT A"/>
    <property type="match status" value="1"/>
</dbReference>
<dbReference type="PANTHER" id="PTHR30292">
    <property type="entry name" value="UNCHARACTERIZED PROTEIN YBGL-RELATED"/>
    <property type="match status" value="1"/>
</dbReference>
<dbReference type="Pfam" id="PF03746">
    <property type="entry name" value="LamB_YcsF"/>
    <property type="match status" value="1"/>
</dbReference>
<dbReference type="SUPFAM" id="SSF88713">
    <property type="entry name" value="Glycoside hydrolase/deacetylase"/>
    <property type="match status" value="1"/>
</dbReference>
<proteinExistence type="inferred from homology"/>
<comment type="function">
    <text evidence="1">Catalyzes the cleavage of 5-oxoproline to form L-glutamate coupled to the hydrolysis of ATP to ADP and inorganic phosphate.</text>
</comment>
<comment type="catalytic activity">
    <reaction evidence="1">
        <text>5-oxo-L-proline + ATP + 2 H2O = L-glutamate + ADP + phosphate + H(+)</text>
        <dbReference type="Rhea" id="RHEA:10348"/>
        <dbReference type="ChEBI" id="CHEBI:15377"/>
        <dbReference type="ChEBI" id="CHEBI:15378"/>
        <dbReference type="ChEBI" id="CHEBI:29985"/>
        <dbReference type="ChEBI" id="CHEBI:30616"/>
        <dbReference type="ChEBI" id="CHEBI:43474"/>
        <dbReference type="ChEBI" id="CHEBI:58402"/>
        <dbReference type="ChEBI" id="CHEBI:456216"/>
        <dbReference type="EC" id="3.5.2.9"/>
    </reaction>
</comment>
<comment type="subunit">
    <text evidence="1">Forms a complex composed of PxpA, PxpB and PxpC.</text>
</comment>
<comment type="similarity">
    <text evidence="1">Belongs to the LamB/PxpA family.</text>
</comment>
<gene>
    <name evidence="1" type="primary">pxpA</name>
    <name type="ordered locus">RPC_2622</name>
</gene>
<reference key="1">
    <citation type="submission" date="2006-03" db="EMBL/GenBank/DDBJ databases">
        <title>Complete sequence of Rhodopseudomonas palustris BisB18.</title>
        <authorList>
            <consortium name="US DOE Joint Genome Institute"/>
            <person name="Copeland A."/>
            <person name="Lucas S."/>
            <person name="Lapidus A."/>
            <person name="Barry K."/>
            <person name="Detter J.C."/>
            <person name="Glavina del Rio T."/>
            <person name="Hammon N."/>
            <person name="Israni S."/>
            <person name="Dalin E."/>
            <person name="Tice H."/>
            <person name="Pitluck S."/>
            <person name="Chain P."/>
            <person name="Malfatti S."/>
            <person name="Shin M."/>
            <person name="Vergez L."/>
            <person name="Schmutz J."/>
            <person name="Larimer F."/>
            <person name="Land M."/>
            <person name="Hauser L."/>
            <person name="Pelletier D.A."/>
            <person name="Kyrpides N."/>
            <person name="Anderson I."/>
            <person name="Oda Y."/>
            <person name="Harwood C.S."/>
            <person name="Richardson P."/>
        </authorList>
    </citation>
    <scope>NUCLEOTIDE SEQUENCE [LARGE SCALE GENOMIC DNA]</scope>
    <source>
        <strain>BisB18</strain>
    </source>
</reference>
<sequence>MTTIDLNCDLGEGFGAWQMGNDAAMIELASSVNIACGFHAGDADIMRNTVALAKAGGVSIGAHPGYRDLHGFGRRPVAGLSAAEIENLVAYQIGALQAVASLAGHKVTHVKAHGALSNVACEDDMTANAIAAAIKAVDRNLIFVVLANSRLLKAGEAAGLPLAHEVFADRAYEDDATLVSRKKPGAVLHDPAQIAARVVRMVQDGAVVSVTGKAIKMRTDTVCIHGDTPGAVEIARGVRQALKAAGIAVAPFAGG</sequence>
<name>PXPA_RHOPB</name>
<protein>
    <recommendedName>
        <fullName evidence="1">5-oxoprolinase subunit A</fullName>
        <shortName evidence="1">5-OPase subunit A</shortName>
        <ecNumber evidence="1">3.5.2.9</ecNumber>
    </recommendedName>
    <alternativeName>
        <fullName evidence="1">5-oxoprolinase (ATP-hydrolyzing) subunit A</fullName>
    </alternativeName>
</protein>
<evidence type="ECO:0000255" key="1">
    <source>
        <dbReference type="HAMAP-Rule" id="MF_00691"/>
    </source>
</evidence>